<sequence>MASLFKKKTVDDIIREQNKELRGTQRAITRDRAALEKQEKQLEMEIKKMAKTGNKDACRVLAKQLVQLRKQKTRTYAVSSKVTSMSTQTKVMSSQMKMAGAMSTTAKTMQAVNKKMDPQKTLQTMQNFQKENMKMEMTDEMINDTLDDIFDASEDEEESQDIVNQVLDEIGIEISGKMAKAPSAAKGLPSTSAAKSKGISDEEIERQLKALGVD</sequence>
<keyword id="KW-0175">Coiled coil</keyword>
<keyword id="KW-0963">Cytoplasm</keyword>
<keyword id="KW-0967">Endosome</keyword>
<keyword id="KW-0472">Membrane</keyword>
<keyword id="KW-0653">Protein transport</keyword>
<keyword id="KW-1185">Reference proteome</keyword>
<keyword id="KW-0813">Transport</keyword>
<proteinExistence type="evidence at transcript level"/>
<comment type="function">
    <text evidence="1">Probable core component of the endosomal sorting required for transport complex III (ESCRT-III) which is involved in multivesicular bodies (MVBs) formation and sorting of endosomal cargo proteins into MVBs. MVBs contain intraluminal vesicles (ILVs) that are generated by invagination and scission from the limiting membrane of the endosome and mostly are delivered to lysosomes enabling degradation of membrane proteins, such as stimulated growth factor receptors, lysosomal enzymes and lipids (By similarity).</text>
</comment>
<comment type="subunit">
    <text evidence="1">Probable core component of the endosomal sorting required for transport complex III (ESCRT-III). ESCRT-III components are thought to multimerize to form a flat lattice on the perimeter membrane of the endosome (By similarity).</text>
</comment>
<comment type="subcellular location">
    <subcellularLocation>
        <location evidence="1">Cytoplasm</location>
        <location evidence="1">Cytosol</location>
    </subcellularLocation>
    <subcellularLocation>
        <location evidence="1">Late endosome membrane</location>
        <topology evidence="1">Peripheral membrane protein</topology>
    </subcellularLocation>
</comment>
<comment type="similarity">
    <text evidence="4">Belongs to the SNF7 family.</text>
</comment>
<reference key="1">
    <citation type="submission" date="2004-08" db="EMBL/GenBank/DDBJ databases">
        <authorList>
            <consortium name="NIH - Xenopus Gene Collection (XGC) project"/>
        </authorList>
    </citation>
    <scope>NUCLEOTIDE SEQUENCE [LARGE SCALE MRNA]</scope>
    <source>
        <tissue>Eye</tissue>
    </source>
</reference>
<protein>
    <recommendedName>
        <fullName>Charged multivesicular body protein 2b-B</fullName>
    </recommendedName>
    <alternativeName>
        <fullName>Chromatin-modifying protein 2b-B</fullName>
        <shortName>CHMP2b-B</shortName>
    </alternativeName>
</protein>
<accession>Q66IV6</accession>
<evidence type="ECO:0000250" key="1"/>
<evidence type="ECO:0000255" key="2"/>
<evidence type="ECO:0000256" key="3">
    <source>
        <dbReference type="SAM" id="MobiDB-lite"/>
    </source>
</evidence>
<evidence type="ECO:0000305" key="4"/>
<dbReference type="EMBL" id="BC081171">
    <property type="protein sequence ID" value="AAH81171.1"/>
    <property type="molecule type" value="mRNA"/>
</dbReference>
<dbReference type="RefSeq" id="NP_001087752.1">
    <property type="nucleotide sequence ID" value="NM_001094283.1"/>
</dbReference>
<dbReference type="SMR" id="Q66IV6"/>
<dbReference type="BioGRID" id="104436">
    <property type="interactions" value="1"/>
</dbReference>
<dbReference type="IntAct" id="Q66IV6">
    <property type="interactions" value="1"/>
</dbReference>
<dbReference type="DNASU" id="447576"/>
<dbReference type="GeneID" id="447576"/>
<dbReference type="KEGG" id="xla:447576"/>
<dbReference type="AGR" id="Xenbase:XB-GENE-948825"/>
<dbReference type="CTD" id="447576"/>
<dbReference type="Xenbase" id="XB-GENE-948825">
    <property type="gene designation" value="chmp2b.L"/>
</dbReference>
<dbReference type="OMA" id="QDMFEDD"/>
<dbReference type="OrthoDB" id="5594417at2759"/>
<dbReference type="Proteomes" id="UP000186698">
    <property type="component" value="Chromosome 2L"/>
</dbReference>
<dbReference type="Bgee" id="447576">
    <property type="expression patterns" value="Expressed in zone of skin and 19 other cell types or tissues"/>
</dbReference>
<dbReference type="GO" id="GO:0005829">
    <property type="term" value="C:cytosol"/>
    <property type="evidence" value="ECO:0007669"/>
    <property type="project" value="UniProtKB-SubCell"/>
</dbReference>
<dbReference type="GO" id="GO:0000815">
    <property type="term" value="C:ESCRT III complex"/>
    <property type="evidence" value="ECO:0000318"/>
    <property type="project" value="GO_Central"/>
</dbReference>
<dbReference type="GO" id="GO:0031902">
    <property type="term" value="C:late endosome membrane"/>
    <property type="evidence" value="ECO:0007669"/>
    <property type="project" value="UniProtKB-SubCell"/>
</dbReference>
<dbReference type="GO" id="GO:0005771">
    <property type="term" value="C:multivesicular body"/>
    <property type="evidence" value="ECO:0000318"/>
    <property type="project" value="GO_Central"/>
</dbReference>
<dbReference type="GO" id="GO:0032509">
    <property type="term" value="P:endosome transport via multivesicular body sorting pathway"/>
    <property type="evidence" value="ECO:0000318"/>
    <property type="project" value="GO_Central"/>
</dbReference>
<dbReference type="GO" id="GO:0045324">
    <property type="term" value="P:late endosome to vacuole transport"/>
    <property type="evidence" value="ECO:0000318"/>
    <property type="project" value="GO_Central"/>
</dbReference>
<dbReference type="GO" id="GO:0015031">
    <property type="term" value="P:protein transport"/>
    <property type="evidence" value="ECO:0000318"/>
    <property type="project" value="GO_Central"/>
</dbReference>
<dbReference type="Gene3D" id="6.10.140.1230">
    <property type="match status" value="1"/>
</dbReference>
<dbReference type="InterPro" id="IPR005024">
    <property type="entry name" value="Snf7_fam"/>
</dbReference>
<dbReference type="PANTHER" id="PTHR10476">
    <property type="entry name" value="CHARGED MULTIVESICULAR BODY PROTEIN"/>
    <property type="match status" value="1"/>
</dbReference>
<dbReference type="Pfam" id="PF03357">
    <property type="entry name" value="Snf7"/>
    <property type="match status" value="1"/>
</dbReference>
<name>CH2BB_XENLA</name>
<feature type="chain" id="PRO_0000211475" description="Charged multivesicular body protein 2b-B">
    <location>
        <begin position="1"/>
        <end position="214"/>
    </location>
</feature>
<feature type="region of interest" description="Disordered" evidence="3">
    <location>
        <begin position="178"/>
        <end position="200"/>
    </location>
</feature>
<feature type="coiled-coil region" evidence="2">
    <location>
        <begin position="25"/>
        <end position="55"/>
    </location>
</feature>
<feature type="short sequence motif" description="MIT-interacting motif">
    <location>
        <begin position="202"/>
        <end position="212"/>
    </location>
</feature>
<organism>
    <name type="scientific">Xenopus laevis</name>
    <name type="common">African clawed frog</name>
    <dbReference type="NCBI Taxonomy" id="8355"/>
    <lineage>
        <taxon>Eukaryota</taxon>
        <taxon>Metazoa</taxon>
        <taxon>Chordata</taxon>
        <taxon>Craniata</taxon>
        <taxon>Vertebrata</taxon>
        <taxon>Euteleostomi</taxon>
        <taxon>Amphibia</taxon>
        <taxon>Batrachia</taxon>
        <taxon>Anura</taxon>
        <taxon>Pipoidea</taxon>
        <taxon>Pipidae</taxon>
        <taxon>Xenopodinae</taxon>
        <taxon>Xenopus</taxon>
        <taxon>Xenopus</taxon>
    </lineage>
</organism>
<gene>
    <name type="primary">chmp2b-b</name>
</gene>